<organism>
    <name type="scientific">Corynebacterium glutamicum (strain ATCC 13032 / DSM 20300 / JCM 1318 / BCRC 11384 / CCUG 27702 / LMG 3730 / NBRC 12168 / NCIMB 10025 / NRRL B-2784 / 534)</name>
    <dbReference type="NCBI Taxonomy" id="196627"/>
    <lineage>
        <taxon>Bacteria</taxon>
        <taxon>Bacillati</taxon>
        <taxon>Actinomycetota</taxon>
        <taxon>Actinomycetes</taxon>
        <taxon>Mycobacteriales</taxon>
        <taxon>Corynebacteriaceae</taxon>
        <taxon>Corynebacterium</taxon>
    </lineage>
</organism>
<name>EFTS_CORGL</name>
<reference key="1">
    <citation type="journal article" date="2003" name="Appl. Microbiol. Biotechnol.">
        <title>The Corynebacterium glutamicum genome: features and impacts on biotechnological processes.</title>
        <authorList>
            <person name="Ikeda M."/>
            <person name="Nakagawa S."/>
        </authorList>
    </citation>
    <scope>NUCLEOTIDE SEQUENCE [LARGE SCALE GENOMIC DNA]</scope>
    <source>
        <strain>ATCC 13032 / DSM 20300 / JCM 1318 / BCRC 11384 / CCUG 27702 / LMG 3730 / NBRC 12168 / NCIMB 10025 / NRRL B-2784 / 534</strain>
    </source>
</reference>
<reference key="2">
    <citation type="journal article" date="2003" name="J. Biotechnol.">
        <title>The complete Corynebacterium glutamicum ATCC 13032 genome sequence and its impact on the production of L-aspartate-derived amino acids and vitamins.</title>
        <authorList>
            <person name="Kalinowski J."/>
            <person name="Bathe B."/>
            <person name="Bartels D."/>
            <person name="Bischoff N."/>
            <person name="Bott M."/>
            <person name="Burkovski A."/>
            <person name="Dusch N."/>
            <person name="Eggeling L."/>
            <person name="Eikmanns B.J."/>
            <person name="Gaigalat L."/>
            <person name="Goesmann A."/>
            <person name="Hartmann M."/>
            <person name="Huthmacher K."/>
            <person name="Kraemer R."/>
            <person name="Linke B."/>
            <person name="McHardy A.C."/>
            <person name="Meyer F."/>
            <person name="Moeckel B."/>
            <person name="Pfefferle W."/>
            <person name="Puehler A."/>
            <person name="Rey D.A."/>
            <person name="Rueckert C."/>
            <person name="Rupp O."/>
            <person name="Sahm H."/>
            <person name="Wendisch V.F."/>
            <person name="Wiegraebe I."/>
            <person name="Tauch A."/>
        </authorList>
    </citation>
    <scope>NUCLEOTIDE SEQUENCE [LARGE SCALE GENOMIC DNA]</scope>
    <source>
        <strain>ATCC 13032 / DSM 20300 / JCM 1318 / BCRC 11384 / CCUG 27702 / LMG 3730 / NBRC 12168 / NCIMB 10025 / NRRL B-2784 / 534</strain>
    </source>
</reference>
<dbReference type="EMBL" id="BA000036">
    <property type="protein sequence ID" value="BAB99418.1"/>
    <property type="molecule type" value="Genomic_DNA"/>
</dbReference>
<dbReference type="EMBL" id="BX927154">
    <property type="protein sequence ID" value="CAF20365.1"/>
    <property type="molecule type" value="Genomic_DNA"/>
</dbReference>
<dbReference type="RefSeq" id="NP_601230.1">
    <property type="nucleotide sequence ID" value="NC_003450.3"/>
</dbReference>
<dbReference type="RefSeq" id="WP_011014830.1">
    <property type="nucleotide sequence ID" value="NC_006958.1"/>
</dbReference>
<dbReference type="SMR" id="Q8NP02"/>
<dbReference type="STRING" id="196627.cg2221"/>
<dbReference type="GeneID" id="1019981"/>
<dbReference type="KEGG" id="cgb:cg2221"/>
<dbReference type="KEGG" id="cgl:Cgl2025"/>
<dbReference type="PATRIC" id="fig|196627.13.peg.1963"/>
<dbReference type="eggNOG" id="COG0264">
    <property type="taxonomic scope" value="Bacteria"/>
</dbReference>
<dbReference type="HOGENOM" id="CLU_047155_0_0_11"/>
<dbReference type="OrthoDB" id="9808348at2"/>
<dbReference type="BioCyc" id="CORYNE:G18NG-11617-MONOMER"/>
<dbReference type="Proteomes" id="UP000000582">
    <property type="component" value="Chromosome"/>
</dbReference>
<dbReference type="Proteomes" id="UP000001009">
    <property type="component" value="Chromosome"/>
</dbReference>
<dbReference type="GO" id="GO:0005737">
    <property type="term" value="C:cytoplasm"/>
    <property type="evidence" value="ECO:0007669"/>
    <property type="project" value="UniProtKB-SubCell"/>
</dbReference>
<dbReference type="GO" id="GO:0003746">
    <property type="term" value="F:translation elongation factor activity"/>
    <property type="evidence" value="ECO:0007669"/>
    <property type="project" value="UniProtKB-UniRule"/>
</dbReference>
<dbReference type="CDD" id="cd14275">
    <property type="entry name" value="UBA_EF-Ts"/>
    <property type="match status" value="1"/>
</dbReference>
<dbReference type="FunFam" id="1.10.286.20:FF:000001">
    <property type="entry name" value="Elongation factor Ts"/>
    <property type="match status" value="1"/>
</dbReference>
<dbReference type="FunFam" id="1.10.8.10:FF:000001">
    <property type="entry name" value="Elongation factor Ts"/>
    <property type="match status" value="1"/>
</dbReference>
<dbReference type="Gene3D" id="1.10.286.20">
    <property type="match status" value="1"/>
</dbReference>
<dbReference type="Gene3D" id="1.10.8.10">
    <property type="entry name" value="DNA helicase RuvA subunit, C-terminal domain"/>
    <property type="match status" value="1"/>
</dbReference>
<dbReference type="Gene3D" id="3.30.479.20">
    <property type="entry name" value="Elongation factor Ts, dimerisation domain"/>
    <property type="match status" value="2"/>
</dbReference>
<dbReference type="HAMAP" id="MF_00050">
    <property type="entry name" value="EF_Ts"/>
    <property type="match status" value="1"/>
</dbReference>
<dbReference type="InterPro" id="IPR036402">
    <property type="entry name" value="EF-Ts_dimer_sf"/>
</dbReference>
<dbReference type="InterPro" id="IPR001816">
    <property type="entry name" value="Transl_elong_EFTs/EF1B"/>
</dbReference>
<dbReference type="InterPro" id="IPR014039">
    <property type="entry name" value="Transl_elong_EFTs/EF1B_dimer"/>
</dbReference>
<dbReference type="InterPro" id="IPR018101">
    <property type="entry name" value="Transl_elong_Ts_CS"/>
</dbReference>
<dbReference type="InterPro" id="IPR009060">
    <property type="entry name" value="UBA-like_sf"/>
</dbReference>
<dbReference type="NCBIfam" id="TIGR00116">
    <property type="entry name" value="tsf"/>
    <property type="match status" value="1"/>
</dbReference>
<dbReference type="PANTHER" id="PTHR11741">
    <property type="entry name" value="ELONGATION FACTOR TS"/>
    <property type="match status" value="1"/>
</dbReference>
<dbReference type="PANTHER" id="PTHR11741:SF0">
    <property type="entry name" value="ELONGATION FACTOR TS, MITOCHONDRIAL"/>
    <property type="match status" value="1"/>
</dbReference>
<dbReference type="Pfam" id="PF00889">
    <property type="entry name" value="EF_TS"/>
    <property type="match status" value="1"/>
</dbReference>
<dbReference type="SUPFAM" id="SSF54713">
    <property type="entry name" value="Elongation factor Ts (EF-Ts), dimerisation domain"/>
    <property type="match status" value="1"/>
</dbReference>
<dbReference type="SUPFAM" id="SSF46934">
    <property type="entry name" value="UBA-like"/>
    <property type="match status" value="1"/>
</dbReference>
<dbReference type="PROSITE" id="PS01126">
    <property type="entry name" value="EF_TS_1"/>
    <property type="match status" value="1"/>
</dbReference>
<dbReference type="PROSITE" id="PS01127">
    <property type="entry name" value="EF_TS_2"/>
    <property type="match status" value="1"/>
</dbReference>
<accession>Q8NP02</accession>
<gene>
    <name evidence="1" type="primary">tsf</name>
    <name type="ordered locus">Cgl2025</name>
    <name type="ordered locus">cg2221</name>
</gene>
<comment type="function">
    <text evidence="1">Associates with the EF-Tu.GDP complex and induces the exchange of GDP to GTP. It remains bound to the aminoacyl-tRNA.EF-Tu.GTP complex up to the GTP hydrolysis stage on the ribosome.</text>
</comment>
<comment type="subcellular location">
    <subcellularLocation>
        <location evidence="1">Cytoplasm</location>
    </subcellularLocation>
</comment>
<comment type="similarity">
    <text evidence="1">Belongs to the EF-Ts family.</text>
</comment>
<protein>
    <recommendedName>
        <fullName evidence="1">Elongation factor Ts</fullName>
        <shortName evidence="1">EF-Ts</shortName>
    </recommendedName>
</protein>
<evidence type="ECO:0000255" key="1">
    <source>
        <dbReference type="HAMAP-Rule" id="MF_00050"/>
    </source>
</evidence>
<keyword id="KW-0963">Cytoplasm</keyword>
<keyword id="KW-0251">Elongation factor</keyword>
<keyword id="KW-0648">Protein biosynthesis</keyword>
<keyword id="KW-1185">Reference proteome</keyword>
<proteinExistence type="inferred from homology"/>
<feature type="chain" id="PRO_0000161112" description="Elongation factor Ts">
    <location>
        <begin position="1"/>
        <end position="275"/>
    </location>
</feature>
<feature type="region of interest" description="Involved in Mg(2+) ion dislocation from EF-Tu" evidence="1">
    <location>
        <begin position="76"/>
        <end position="79"/>
    </location>
</feature>
<sequence>MANYTAADVKKLRELTGSGMLDCKKALEESAGDFDKAVEILRVKGAKDVGKRAERNATEGLVAVSGNTMVEVNSETDFVAKNSDFKEFAAKVADAAAAAKANSQEELAAVDVDGQTADAALQEFSAKIGEKLELRRAVTLEGDKTAVYLHQRSADLPPAVGVLVAFTGEGEAAEAAARQAAMQIAALKASYLTREDVPAEIIEKERSIAEQITREEGKPEQAIPKIVEGRLNGFYKENVLLEQSSVADSKKTVKALLDEAGVTVTSFARFEVGQA</sequence>